<keyword id="KW-0158">Chromosome</keyword>
<keyword id="KW-0903">Direct protein sequencing</keyword>
<keyword id="KW-0238">DNA-binding</keyword>
<keyword id="KW-0325">Glycoprotein</keyword>
<keyword id="KW-1017">Isopeptide bond</keyword>
<keyword id="KW-0488">Methylation</keyword>
<keyword id="KW-0544">Nucleosome core</keyword>
<keyword id="KW-0539">Nucleus</keyword>
<keyword id="KW-0832">Ubl conjugation</keyword>
<sequence length="121" mass="13481">MPPKSGKGQKKAGKAKGAPRSDKKRRRKRKESYGIYIYKVMKQVHPDTGISSRAMSIMNSFVNDIFERIAAEASRLAHYNKKSTITSREVQTAVRLLLPGELAKHAVSEGTKAVTKYTTSK</sequence>
<protein>
    <recommendedName>
        <fullName>Histone H2B, sperm</fullName>
    </recommendedName>
</protein>
<reference key="1">
    <citation type="journal article" date="1980" name="Eur. J. Biochem.">
        <title>The histone H2B from the sperm cell of the starfish Marthasterias glacialis.</title>
        <authorList>
            <person name="Strickland M."/>
            <person name="Strickland W.N."/>
            <person name="von Holt C."/>
        </authorList>
    </citation>
    <scope>PROTEIN SEQUENCE OF 2-121</scope>
</reference>
<evidence type="ECO:0000250" key="1"/>
<evidence type="ECO:0000250" key="2">
    <source>
        <dbReference type="UniProtKB" id="P02286"/>
    </source>
</evidence>
<evidence type="ECO:0000256" key="3">
    <source>
        <dbReference type="SAM" id="MobiDB-lite"/>
    </source>
</evidence>
<evidence type="ECO:0000269" key="4">
    <source>
    </source>
</evidence>
<evidence type="ECO:0000305" key="5"/>
<feature type="initiator methionine" description="Removed" evidence="4">
    <location>
        <position position="1"/>
    </location>
</feature>
<feature type="chain" id="PRO_0000071887" description="Histone H2B, sperm">
    <location>
        <begin position="2"/>
        <end position="121"/>
    </location>
</feature>
<feature type="region of interest" description="Disordered" evidence="3">
    <location>
        <begin position="1"/>
        <end position="30"/>
    </location>
</feature>
<feature type="modified residue" description="N,N-dimethylproline" evidence="2">
    <location>
        <position position="2"/>
    </location>
</feature>
<feature type="glycosylation site" description="O-linked (GlcNAc) serine" evidence="1">
    <location>
        <position position="108"/>
    </location>
</feature>
<feature type="cross-link" description="Glycyl lysine isopeptide (Lys-Gly) (interchain with G-Cter in ubiquitin)" evidence="1">
    <location>
        <position position="116"/>
    </location>
</feature>
<dbReference type="PIR" id="A02612">
    <property type="entry name" value="HSSF2M"/>
</dbReference>
<dbReference type="SMR" id="P02285"/>
<dbReference type="GO" id="GO:0000786">
    <property type="term" value="C:nucleosome"/>
    <property type="evidence" value="ECO:0007669"/>
    <property type="project" value="UniProtKB-KW"/>
</dbReference>
<dbReference type="GO" id="GO:0005634">
    <property type="term" value="C:nucleus"/>
    <property type="evidence" value="ECO:0007669"/>
    <property type="project" value="UniProtKB-SubCell"/>
</dbReference>
<dbReference type="GO" id="GO:0003677">
    <property type="term" value="F:DNA binding"/>
    <property type="evidence" value="ECO:0007669"/>
    <property type="project" value="UniProtKB-KW"/>
</dbReference>
<dbReference type="GO" id="GO:0046982">
    <property type="term" value="F:protein heterodimerization activity"/>
    <property type="evidence" value="ECO:0007669"/>
    <property type="project" value="InterPro"/>
</dbReference>
<dbReference type="GO" id="GO:0044877">
    <property type="term" value="F:protein-containing complex binding"/>
    <property type="evidence" value="ECO:0000250"/>
    <property type="project" value="UniProtKB"/>
</dbReference>
<dbReference type="GO" id="GO:0030527">
    <property type="term" value="F:structural constituent of chromatin"/>
    <property type="evidence" value="ECO:0007669"/>
    <property type="project" value="InterPro"/>
</dbReference>
<dbReference type="CDD" id="cd22910">
    <property type="entry name" value="HFD_H2B"/>
    <property type="match status" value="1"/>
</dbReference>
<dbReference type="FunFam" id="1.10.20.10:FF:000016">
    <property type="entry name" value="Histone H2B"/>
    <property type="match status" value="1"/>
</dbReference>
<dbReference type="Gene3D" id="1.10.20.10">
    <property type="entry name" value="Histone, subunit A"/>
    <property type="match status" value="1"/>
</dbReference>
<dbReference type="InterPro" id="IPR009072">
    <property type="entry name" value="Histone-fold"/>
</dbReference>
<dbReference type="InterPro" id="IPR007125">
    <property type="entry name" value="Histone_H2A/H2B/H3"/>
</dbReference>
<dbReference type="InterPro" id="IPR000558">
    <property type="entry name" value="Histone_H2B"/>
</dbReference>
<dbReference type="InterPro" id="IPR055333">
    <property type="entry name" value="HISTONE_H2B_site"/>
</dbReference>
<dbReference type="PANTHER" id="PTHR23428">
    <property type="entry name" value="HISTONE H2B"/>
    <property type="match status" value="1"/>
</dbReference>
<dbReference type="Pfam" id="PF00125">
    <property type="entry name" value="Histone"/>
    <property type="match status" value="1"/>
</dbReference>
<dbReference type="PRINTS" id="PR00621">
    <property type="entry name" value="HISTONEH2B"/>
</dbReference>
<dbReference type="SMART" id="SM00427">
    <property type="entry name" value="H2B"/>
    <property type="match status" value="1"/>
</dbReference>
<dbReference type="SUPFAM" id="SSF47113">
    <property type="entry name" value="Histone-fold"/>
    <property type="match status" value="1"/>
</dbReference>
<dbReference type="PROSITE" id="PS00357">
    <property type="entry name" value="HISTONE_H2B"/>
    <property type="match status" value="1"/>
</dbReference>
<comment type="function">
    <text>Core component of nucleosome. Nucleosomes wrap and compact DNA into chromatin, limiting DNA accessibility to the cellular machineries which require DNA as a template. Histones thereby play a central role in transcription regulation, DNA repair, DNA replication and chromosomal stability. DNA accessibility is regulated via a complex set of post-translational modifications of histones, also called histone code, and nucleosome remodeling.</text>
</comment>
<comment type="subunit">
    <text>The nucleosome is a histone octamer containing two molecules each of H2A, H2B, H3 and H4 assembled in one H3-H4 heterotetramer and two H2A-H2B heterodimers. The octamer wraps approximately 147 bp of DNA.</text>
</comment>
<comment type="subcellular location">
    <subcellularLocation>
        <location>Nucleus</location>
    </subcellularLocation>
    <subcellularLocation>
        <location>Chromosome</location>
    </subcellularLocation>
</comment>
<comment type="PTM">
    <text evidence="1">Monoubiquitination of Lys-116 gives a specific tag for epigenetic transcriptional activation and is also prerequisite for histone H3 'Lys-4' and 'Lys-79' methylation.</text>
</comment>
<comment type="PTM">
    <text evidence="1">GlcNAcylation at Ser-108 promotes monoubiquitination of Lys-116. It fluctuates in response to extracellular glucose, and associates with transcribed genes (By similarity).</text>
</comment>
<comment type="similarity">
    <text evidence="5">Belongs to the histone H2B family.</text>
</comment>
<organism>
    <name type="scientific">Marthasterias glacialis</name>
    <name type="common">Spiny starfish</name>
    <dbReference type="NCBI Taxonomy" id="7609"/>
    <lineage>
        <taxon>Eukaryota</taxon>
        <taxon>Metazoa</taxon>
        <taxon>Echinodermata</taxon>
        <taxon>Eleutherozoa</taxon>
        <taxon>Asterozoa</taxon>
        <taxon>Asteroidea</taxon>
        <taxon>Forcipulatacea</taxon>
        <taxon>Forcipulatida</taxon>
        <taxon>Asteriidae</taxon>
        <taxon>Marthasterias</taxon>
    </lineage>
</organism>
<name>H2B_MARGL</name>
<proteinExistence type="evidence at protein level"/>
<accession>P02285</accession>